<feature type="chain" id="PRO_1000145497" description="dITP/XTP pyrophosphatase">
    <location>
        <begin position="1"/>
        <end position="203"/>
    </location>
</feature>
<feature type="active site" description="Proton acceptor" evidence="1">
    <location>
        <position position="77"/>
    </location>
</feature>
<feature type="binding site" evidence="1">
    <location>
        <begin position="7"/>
        <end position="12"/>
    </location>
    <ligand>
        <name>substrate</name>
    </ligand>
</feature>
<feature type="binding site" evidence="1">
    <location>
        <position position="47"/>
    </location>
    <ligand>
        <name>Mg(2+)</name>
        <dbReference type="ChEBI" id="CHEBI:18420"/>
    </ligand>
</feature>
<feature type="binding site" evidence="1">
    <location>
        <position position="77"/>
    </location>
    <ligand>
        <name>Mg(2+)</name>
        <dbReference type="ChEBI" id="CHEBI:18420"/>
    </ligand>
</feature>
<feature type="binding site" evidence="1">
    <location>
        <position position="78"/>
    </location>
    <ligand>
        <name>substrate</name>
    </ligand>
</feature>
<feature type="binding site" evidence="1">
    <location>
        <begin position="160"/>
        <end position="163"/>
    </location>
    <ligand>
        <name>substrate</name>
    </ligand>
</feature>
<feature type="binding site" evidence="1">
    <location>
        <position position="183"/>
    </location>
    <ligand>
        <name>substrate</name>
    </ligand>
</feature>
<feature type="binding site" evidence="1">
    <location>
        <begin position="188"/>
        <end position="189"/>
    </location>
    <ligand>
        <name>substrate</name>
    </ligand>
</feature>
<organism>
    <name type="scientific">Opitutus terrae (strain DSM 11246 / JCM 15787 / PB90-1)</name>
    <dbReference type="NCBI Taxonomy" id="452637"/>
    <lineage>
        <taxon>Bacteria</taxon>
        <taxon>Pseudomonadati</taxon>
        <taxon>Verrucomicrobiota</taxon>
        <taxon>Opitutia</taxon>
        <taxon>Opitutales</taxon>
        <taxon>Opitutaceae</taxon>
        <taxon>Opitutus</taxon>
    </lineage>
</organism>
<protein>
    <recommendedName>
        <fullName evidence="1">dITP/XTP pyrophosphatase</fullName>
        <ecNumber evidence="1">3.6.1.66</ecNumber>
    </recommendedName>
    <alternativeName>
        <fullName evidence="1">Non-canonical purine NTP pyrophosphatase</fullName>
    </alternativeName>
    <alternativeName>
        <fullName evidence="1">Non-standard purine NTP pyrophosphatase</fullName>
    </alternativeName>
    <alternativeName>
        <fullName evidence="1">Nucleoside-triphosphate diphosphatase</fullName>
    </alternativeName>
    <alternativeName>
        <fullName evidence="1">Nucleoside-triphosphate pyrophosphatase</fullName>
        <shortName evidence="1">NTPase</shortName>
    </alternativeName>
</protein>
<name>IXTPA_OPITP</name>
<accession>B1ZXD5</accession>
<gene>
    <name type="ordered locus">Oter_3653</name>
</gene>
<comment type="function">
    <text evidence="1">Pyrophosphatase that catalyzes the hydrolysis of nucleoside triphosphates to their monophosphate derivatives, with a high preference for the non-canonical purine nucleotides XTP (xanthosine triphosphate), dITP (deoxyinosine triphosphate) and ITP. Seems to function as a house-cleaning enzyme that removes non-canonical purine nucleotides from the nucleotide pool, thus preventing their incorporation into DNA/RNA and avoiding chromosomal lesions.</text>
</comment>
<comment type="catalytic activity">
    <reaction evidence="1">
        <text>XTP + H2O = XMP + diphosphate + H(+)</text>
        <dbReference type="Rhea" id="RHEA:28610"/>
        <dbReference type="ChEBI" id="CHEBI:15377"/>
        <dbReference type="ChEBI" id="CHEBI:15378"/>
        <dbReference type="ChEBI" id="CHEBI:33019"/>
        <dbReference type="ChEBI" id="CHEBI:57464"/>
        <dbReference type="ChEBI" id="CHEBI:61314"/>
        <dbReference type="EC" id="3.6.1.66"/>
    </reaction>
</comment>
<comment type="catalytic activity">
    <reaction evidence="1">
        <text>dITP + H2O = dIMP + diphosphate + H(+)</text>
        <dbReference type="Rhea" id="RHEA:28342"/>
        <dbReference type="ChEBI" id="CHEBI:15377"/>
        <dbReference type="ChEBI" id="CHEBI:15378"/>
        <dbReference type="ChEBI" id="CHEBI:33019"/>
        <dbReference type="ChEBI" id="CHEBI:61194"/>
        <dbReference type="ChEBI" id="CHEBI:61382"/>
        <dbReference type="EC" id="3.6.1.66"/>
    </reaction>
</comment>
<comment type="catalytic activity">
    <reaction evidence="1">
        <text>ITP + H2O = IMP + diphosphate + H(+)</text>
        <dbReference type="Rhea" id="RHEA:29399"/>
        <dbReference type="ChEBI" id="CHEBI:15377"/>
        <dbReference type="ChEBI" id="CHEBI:15378"/>
        <dbReference type="ChEBI" id="CHEBI:33019"/>
        <dbReference type="ChEBI" id="CHEBI:58053"/>
        <dbReference type="ChEBI" id="CHEBI:61402"/>
        <dbReference type="EC" id="3.6.1.66"/>
    </reaction>
</comment>
<comment type="cofactor">
    <cofactor evidence="1">
        <name>Mg(2+)</name>
        <dbReference type="ChEBI" id="CHEBI:18420"/>
    </cofactor>
    <text evidence="1">Binds 1 Mg(2+) ion per subunit.</text>
</comment>
<comment type="subunit">
    <text evidence="1">Homodimer.</text>
</comment>
<comment type="similarity">
    <text evidence="1">Belongs to the HAM1 NTPase family.</text>
</comment>
<reference key="1">
    <citation type="journal article" date="2011" name="J. Bacteriol.">
        <title>Genome sequence of the verrucomicrobium Opitutus terrae PB90-1, an abundant inhabitant of rice paddy soil ecosystems.</title>
        <authorList>
            <person name="van Passel M.W."/>
            <person name="Kant R."/>
            <person name="Palva A."/>
            <person name="Copeland A."/>
            <person name="Lucas S."/>
            <person name="Lapidus A."/>
            <person name="Glavina del Rio T."/>
            <person name="Pitluck S."/>
            <person name="Goltsman E."/>
            <person name="Clum A."/>
            <person name="Sun H."/>
            <person name="Schmutz J."/>
            <person name="Larimer F.W."/>
            <person name="Land M.L."/>
            <person name="Hauser L."/>
            <person name="Kyrpides N."/>
            <person name="Mikhailova N."/>
            <person name="Richardson P.P."/>
            <person name="Janssen P.H."/>
            <person name="de Vos W.M."/>
            <person name="Smidt H."/>
        </authorList>
    </citation>
    <scope>NUCLEOTIDE SEQUENCE [LARGE SCALE GENOMIC DNA]</scope>
    <source>
        <strain>DSM 11246 / JCM 15787 / PB90-1</strain>
    </source>
</reference>
<keyword id="KW-0378">Hydrolase</keyword>
<keyword id="KW-0460">Magnesium</keyword>
<keyword id="KW-0479">Metal-binding</keyword>
<keyword id="KW-0546">Nucleotide metabolism</keyword>
<keyword id="KW-0547">Nucleotide-binding</keyword>
<keyword id="KW-1185">Reference proteome</keyword>
<proteinExistence type="inferred from homology"/>
<dbReference type="EC" id="3.6.1.66" evidence="1"/>
<dbReference type="EMBL" id="CP001032">
    <property type="protein sequence ID" value="ACB76930.1"/>
    <property type="molecule type" value="Genomic_DNA"/>
</dbReference>
<dbReference type="RefSeq" id="WP_012376459.1">
    <property type="nucleotide sequence ID" value="NC_010571.1"/>
</dbReference>
<dbReference type="SMR" id="B1ZXD5"/>
<dbReference type="STRING" id="452637.Oter_3653"/>
<dbReference type="KEGG" id="ote:Oter_3653"/>
<dbReference type="eggNOG" id="COG0127">
    <property type="taxonomic scope" value="Bacteria"/>
</dbReference>
<dbReference type="HOGENOM" id="CLU_082080_0_2_0"/>
<dbReference type="OrthoDB" id="9807456at2"/>
<dbReference type="Proteomes" id="UP000007013">
    <property type="component" value="Chromosome"/>
</dbReference>
<dbReference type="GO" id="GO:0005829">
    <property type="term" value="C:cytosol"/>
    <property type="evidence" value="ECO:0007669"/>
    <property type="project" value="TreeGrafter"/>
</dbReference>
<dbReference type="GO" id="GO:0035870">
    <property type="term" value="F:dITP diphosphatase activity"/>
    <property type="evidence" value="ECO:0007669"/>
    <property type="project" value="RHEA"/>
</dbReference>
<dbReference type="GO" id="GO:0036220">
    <property type="term" value="F:ITP diphosphatase activity"/>
    <property type="evidence" value="ECO:0007669"/>
    <property type="project" value="UniProtKB-EC"/>
</dbReference>
<dbReference type="GO" id="GO:0046872">
    <property type="term" value="F:metal ion binding"/>
    <property type="evidence" value="ECO:0007669"/>
    <property type="project" value="UniProtKB-KW"/>
</dbReference>
<dbReference type="GO" id="GO:0000166">
    <property type="term" value="F:nucleotide binding"/>
    <property type="evidence" value="ECO:0007669"/>
    <property type="project" value="UniProtKB-KW"/>
</dbReference>
<dbReference type="GO" id="GO:0017111">
    <property type="term" value="F:ribonucleoside triphosphate phosphatase activity"/>
    <property type="evidence" value="ECO:0007669"/>
    <property type="project" value="InterPro"/>
</dbReference>
<dbReference type="GO" id="GO:0036222">
    <property type="term" value="F:XTP diphosphatase activity"/>
    <property type="evidence" value="ECO:0007669"/>
    <property type="project" value="RHEA"/>
</dbReference>
<dbReference type="GO" id="GO:0009117">
    <property type="term" value="P:nucleotide metabolic process"/>
    <property type="evidence" value="ECO:0007669"/>
    <property type="project" value="UniProtKB-KW"/>
</dbReference>
<dbReference type="GO" id="GO:0009146">
    <property type="term" value="P:purine nucleoside triphosphate catabolic process"/>
    <property type="evidence" value="ECO:0007669"/>
    <property type="project" value="UniProtKB-UniRule"/>
</dbReference>
<dbReference type="CDD" id="cd00515">
    <property type="entry name" value="HAM1"/>
    <property type="match status" value="1"/>
</dbReference>
<dbReference type="FunFam" id="3.90.950.10:FF:000001">
    <property type="entry name" value="dITP/XTP pyrophosphatase"/>
    <property type="match status" value="1"/>
</dbReference>
<dbReference type="Gene3D" id="3.90.950.10">
    <property type="match status" value="1"/>
</dbReference>
<dbReference type="HAMAP" id="MF_01405">
    <property type="entry name" value="Non_canon_purine_NTPase"/>
    <property type="match status" value="1"/>
</dbReference>
<dbReference type="InterPro" id="IPR020922">
    <property type="entry name" value="dITP/XTP_pyrophosphatase"/>
</dbReference>
<dbReference type="InterPro" id="IPR029001">
    <property type="entry name" value="ITPase-like_fam"/>
</dbReference>
<dbReference type="InterPro" id="IPR002637">
    <property type="entry name" value="RdgB/HAM1"/>
</dbReference>
<dbReference type="PANTHER" id="PTHR11067:SF9">
    <property type="entry name" value="INOSINE TRIPHOSPHATE PYROPHOSPHATASE"/>
    <property type="match status" value="1"/>
</dbReference>
<dbReference type="PANTHER" id="PTHR11067">
    <property type="entry name" value="INOSINE TRIPHOSPHATE PYROPHOSPHATASE/HAM1 PROTEIN"/>
    <property type="match status" value="1"/>
</dbReference>
<dbReference type="Pfam" id="PF01725">
    <property type="entry name" value="Ham1p_like"/>
    <property type="match status" value="1"/>
</dbReference>
<dbReference type="SUPFAM" id="SSF52972">
    <property type="entry name" value="ITPase-like"/>
    <property type="match status" value="1"/>
</dbReference>
<sequence>MKLHLASGNLHKAEEFAVLAAASARDDAPAIEIVSARAMGGMPEVVEDTGTFVGNARKKAAALRVRLPAGSWVLADDSGVCVDALHGGPGVESAYYAGPEASGRANYEKLLRVLADVPDERRGAYFFCLLLVLDGAGAEYVFEGRCQGRLLREPRGSAGFGYDPIFVPDGFDRSYAELGEDVKNRISHRARAWAQLAEWGRRS</sequence>
<evidence type="ECO:0000255" key="1">
    <source>
        <dbReference type="HAMAP-Rule" id="MF_01405"/>
    </source>
</evidence>